<gene>
    <name type="primary">COMMD1</name>
</gene>
<keyword id="KW-0186">Copper</keyword>
<keyword id="KW-0963">Cytoplasm</keyword>
<keyword id="KW-0968">Cytoplasmic vesicle</keyword>
<keyword id="KW-0967">Endosome</keyword>
<keyword id="KW-0472">Membrane</keyword>
<keyword id="KW-0479">Metal-binding</keyword>
<keyword id="KW-0539">Nucleus</keyword>
<keyword id="KW-0653">Protein transport</keyword>
<keyword id="KW-1185">Reference proteome</keyword>
<keyword id="KW-0804">Transcription</keyword>
<keyword id="KW-0805">Transcription regulation</keyword>
<keyword id="KW-0813">Transport</keyword>
<keyword id="KW-0832">Ubl conjugation</keyword>
<keyword id="KW-0833">Ubl conjugation pathway</keyword>
<evidence type="ECO:0000250" key="1">
    <source>
        <dbReference type="UniProtKB" id="Q8N668"/>
    </source>
</evidence>
<evidence type="ECO:0000255" key="2"/>
<evidence type="ECO:0000255" key="3">
    <source>
        <dbReference type="PROSITE-ProRule" id="PRU00602"/>
    </source>
</evidence>
<evidence type="ECO:0000305" key="4"/>
<comment type="function">
    <text evidence="1">Scaffold protein in the commander complex that is essential for endosomal recycling of transmembrane cargos; the commander complex is composed of the CCC subcomplex and the retriever subcomplex (By similarity). Can modulate activity of cullin-RING E3 ubiquitin ligase (CRL) complexes by displacing CAND1; in vitro promotes CRL E3 activity and dissociates CAND1 from CUL1 and CUL2 (By similarity). Promotes ubiquitination of NF-kappa-B subunit RELA and its subsequent proteasomal degradation. Down-regulates NF-kappa-B activity (By similarity). Involved in the regulation of membrane expression and ubiquitination of SLC12A2 (By similarity). Modulates Na(+) transport in epithelial cells by regulation of apical cell surface expression of amiloride-sensitive sodium channel (ENaC) subunits and by promoting their ubiquitination presumably involving NEDD4L. Promotes the localization of SCNN1D to recycling endosomes (By similarity). Promotes CFTR cell surface expression through regulation of its ubiquitination (By similarity). Down-regulates SOD1 activity by interfering with its homodimerization (By similarity). Plays a role in copper ion homeostasis. Involved in copper-dependent ATP7A trafficking between the trans-Golgi network and vesicles in the cell periphery; the function is proposed to depend on its association within the CCC complex and cooperation with the WASH complex on early endosomes (By similarity). Can bind one copper ion per monomer (By similarity). May function to facilitate biliary copper excretion within hepatocytes. Binds to phosphatidylinositol 4,5-bisphosphate (PtdIns(4,5)P2) (By similarity). Involved in the regulation of HIF1A-mediated transcription; competes with ARNT/Hif-1-beta for binding to HIF1A resulting in decreased DNA binding and impaired transcriptional activation by HIF-1 (By similarity). Negatively regulates neuroblastoma G1/S phase cell cycle progression and cell proliferation by stimulating ubiquitination of NF-kappa-B subunit RELA and NF-kappa-B degradation in a FAM107A- and actin-dependent manner (By similarity).</text>
</comment>
<comment type="subunit">
    <text evidence="1">Component of the commander complex consisting of the CCC subcomplex and the retriever subcomplex (By similarity). Component of the CCC (COMMD/CCDC22/CCDC93) subcomplex consisting of COMMD1, COMMD2, COMMD3, COMMD4, COMMD5, COMMD6, COMMD7, COMMD8, COMMD9, COMMD10, CCDC22 and CCDC93; within the complex forms a heterodimer with COMMD6 (By similarity). Interacts with VPS35L; the interaction associates the CCC complex with the retriever complex (By similarity). Identified in a complex with an E3 ubiquitin ligase complex composed of TCEB1/elongin C, CUL2, SOCS1 and RBX1; in the complex interacts directly with SOCS1 and CUL2 (By similarity). Identified in a complex with NF-kappa-B (By similarity). Interacts directly with SLC12A2 (By similarity). Interacts directly with ATP7B (via the N-terminal region) (By similarity). Interacts with ATP7A (By similarity). Interacts with FAM107A; this interaction stabilizes COMMD1 in the nucleus (By similarity). Interacts with CCS, CDKN2A, RELA, REL, RELB, NFKB1/p105, NFKB2/p100, NFKBIB, SCNN1D, SCNN1B, CFTR, CLU, SGK1, AKT1, CUL1, CUL2, CUL3, CUL4A, CUL4B, CUL5, CUL7, HIF1A (By similarity).</text>
</comment>
<comment type="subcellular location">
    <subcellularLocation>
        <location evidence="1">Nucleus</location>
    </subcellularLocation>
    <subcellularLocation>
        <location evidence="1">Cytoplasm</location>
    </subcellularLocation>
    <subcellularLocation>
        <location evidence="1">Endosome membrane</location>
    </subcellularLocation>
    <subcellularLocation>
        <location evidence="1">Cytoplasmic vesicle</location>
    </subcellularLocation>
    <subcellularLocation>
        <location evidence="1">Early endosome</location>
    </subcellularLocation>
    <subcellularLocation>
        <location evidence="1">Recycling endosome</location>
    </subcellularLocation>
    <text evidence="1">Shuttles between nucleus and cytosol. Detected in perinuclear foci that may be aggresomes containing misfolded, ubiquitinated proteins (By similarity).</text>
</comment>
<comment type="PTM">
    <text evidence="1">Ubiquitinated; undergoes both 'Lys-63'- and 'Lys-48'-linked polyubiquitination. Ubiquitinated by XIAP, leading to its proteasomal degradation (By similarity).</text>
</comment>
<comment type="similarity">
    <text evidence="4">Belongs to the COMM domain-containing protein 1 family.</text>
</comment>
<protein>
    <recommendedName>
        <fullName>COMM domain-containing protein 1</fullName>
    </recommendedName>
</protein>
<name>COMD1_BOVIN</name>
<reference key="1">
    <citation type="submission" date="2006-01" db="EMBL/GenBank/DDBJ databases">
        <authorList>
            <consortium name="NIH - Mammalian Gene Collection (MGC) project"/>
        </authorList>
    </citation>
    <scope>NUCLEOTIDE SEQUENCE [LARGE SCALE MRNA]</scope>
    <source>
        <strain>Hereford</strain>
        <tissue>Testis</tissue>
    </source>
</reference>
<dbReference type="EMBL" id="BC111639">
    <property type="protein sequence ID" value="AAI11640.1"/>
    <property type="molecule type" value="mRNA"/>
</dbReference>
<dbReference type="RefSeq" id="NP_001039849.1">
    <property type="nucleotide sequence ID" value="NM_001046384.2"/>
</dbReference>
<dbReference type="SMR" id="Q2M2T5"/>
<dbReference type="FunCoup" id="Q2M2T5">
    <property type="interactions" value="745"/>
</dbReference>
<dbReference type="STRING" id="9913.ENSBTAP00000026470"/>
<dbReference type="PaxDb" id="9913-ENSBTAP00000026470"/>
<dbReference type="GeneID" id="534683"/>
<dbReference type="KEGG" id="bta:534683"/>
<dbReference type="CTD" id="150684"/>
<dbReference type="eggNOG" id="ENOG502RXN6">
    <property type="taxonomic scope" value="Eukaryota"/>
</dbReference>
<dbReference type="InParanoid" id="Q2M2T5"/>
<dbReference type="OrthoDB" id="10251426at2759"/>
<dbReference type="Proteomes" id="UP000009136">
    <property type="component" value="Unplaced"/>
</dbReference>
<dbReference type="GO" id="GO:0031462">
    <property type="term" value="C:Cul2-RING ubiquitin ligase complex"/>
    <property type="evidence" value="ECO:0000250"/>
    <property type="project" value="UniProtKB"/>
</dbReference>
<dbReference type="GO" id="GO:0005737">
    <property type="term" value="C:cytoplasm"/>
    <property type="evidence" value="ECO:0000250"/>
    <property type="project" value="UniProtKB"/>
</dbReference>
<dbReference type="GO" id="GO:0005769">
    <property type="term" value="C:early endosome"/>
    <property type="evidence" value="ECO:0007669"/>
    <property type="project" value="UniProtKB-SubCell"/>
</dbReference>
<dbReference type="GO" id="GO:0005768">
    <property type="term" value="C:endosome"/>
    <property type="evidence" value="ECO:0000318"/>
    <property type="project" value="GO_Central"/>
</dbReference>
<dbReference type="GO" id="GO:0010008">
    <property type="term" value="C:endosome membrane"/>
    <property type="evidence" value="ECO:0007669"/>
    <property type="project" value="UniProtKB-SubCell"/>
</dbReference>
<dbReference type="GO" id="GO:0005634">
    <property type="term" value="C:nucleus"/>
    <property type="evidence" value="ECO:0000250"/>
    <property type="project" value="UniProtKB"/>
</dbReference>
<dbReference type="GO" id="GO:0055037">
    <property type="term" value="C:recycling endosome"/>
    <property type="evidence" value="ECO:0007669"/>
    <property type="project" value="UniProtKB-SubCell"/>
</dbReference>
<dbReference type="GO" id="GO:0005507">
    <property type="term" value="F:copper ion binding"/>
    <property type="evidence" value="ECO:0000250"/>
    <property type="project" value="UniProtKB"/>
</dbReference>
<dbReference type="GO" id="GO:0055070">
    <property type="term" value="P:copper ion homeostasis"/>
    <property type="evidence" value="ECO:0000250"/>
    <property type="project" value="UniProtKB"/>
</dbReference>
<dbReference type="GO" id="GO:0032088">
    <property type="term" value="P:negative regulation of NF-kappaB transcription factor activity"/>
    <property type="evidence" value="ECO:0000250"/>
    <property type="project" value="UniProtKB"/>
</dbReference>
<dbReference type="GO" id="GO:2000009">
    <property type="term" value="P:negative regulation of protein localization to cell surface"/>
    <property type="evidence" value="ECO:0000318"/>
    <property type="project" value="GO_Central"/>
</dbReference>
<dbReference type="GO" id="GO:1902306">
    <property type="term" value="P:negative regulation of sodium ion transmembrane transport"/>
    <property type="evidence" value="ECO:0000318"/>
    <property type="project" value="GO_Central"/>
</dbReference>
<dbReference type="GO" id="GO:0031398">
    <property type="term" value="P:positive regulation of protein ubiquitination"/>
    <property type="evidence" value="ECO:0000250"/>
    <property type="project" value="UniProtKB"/>
</dbReference>
<dbReference type="GO" id="GO:0015031">
    <property type="term" value="P:protein transport"/>
    <property type="evidence" value="ECO:0007669"/>
    <property type="project" value="UniProtKB-KW"/>
</dbReference>
<dbReference type="GO" id="GO:0032434">
    <property type="term" value="P:regulation of proteasomal ubiquitin-dependent protein catabolic process"/>
    <property type="evidence" value="ECO:0000250"/>
    <property type="project" value="UniProtKB"/>
</dbReference>
<dbReference type="CDD" id="cd04749">
    <property type="entry name" value="Commd1_MURR1"/>
    <property type="match status" value="1"/>
</dbReference>
<dbReference type="InterPro" id="IPR017920">
    <property type="entry name" value="COMM"/>
</dbReference>
<dbReference type="InterPro" id="IPR033776">
    <property type="entry name" value="COMMD1_N"/>
</dbReference>
<dbReference type="InterPro" id="IPR037351">
    <property type="entry name" value="Murr1"/>
</dbReference>
<dbReference type="PANTHER" id="PTHR21199">
    <property type="entry name" value="COMM DOMAIN-CONTAINING PROTEIN 1"/>
    <property type="match status" value="1"/>
</dbReference>
<dbReference type="PANTHER" id="PTHR21199:SF1">
    <property type="entry name" value="COMM DOMAIN-CONTAINING PROTEIN 1"/>
    <property type="match status" value="1"/>
</dbReference>
<dbReference type="Pfam" id="PF07258">
    <property type="entry name" value="COMM_domain"/>
    <property type="match status" value="1"/>
</dbReference>
<dbReference type="Pfam" id="PF17221">
    <property type="entry name" value="COMMD1_N"/>
    <property type="match status" value="1"/>
</dbReference>
<dbReference type="PROSITE" id="PS51269">
    <property type="entry name" value="COMM"/>
    <property type="match status" value="1"/>
</dbReference>
<proteinExistence type="evidence at transcript level"/>
<sequence>MAAELEGSKCLSGLLSGLAQDTFYGHPGITEELLRSQLYPEVSLEEFRPFLAKMKGILKSIASADMDFNQLEAFLTALTKKQGGITSEQAAVISKFWKSHKTKIRESLMNQSCWDRGLRSLSWRVDGKSQSRHSAQIHTPVAIMELEIGKSGQESEFLCLEFDEVKVNQVLKKLSEVEESISTLMQPA</sequence>
<organism>
    <name type="scientific">Bos taurus</name>
    <name type="common">Bovine</name>
    <dbReference type="NCBI Taxonomy" id="9913"/>
    <lineage>
        <taxon>Eukaryota</taxon>
        <taxon>Metazoa</taxon>
        <taxon>Chordata</taxon>
        <taxon>Craniata</taxon>
        <taxon>Vertebrata</taxon>
        <taxon>Euteleostomi</taxon>
        <taxon>Mammalia</taxon>
        <taxon>Eutheria</taxon>
        <taxon>Laurasiatheria</taxon>
        <taxon>Artiodactyla</taxon>
        <taxon>Ruminantia</taxon>
        <taxon>Pecora</taxon>
        <taxon>Bovidae</taxon>
        <taxon>Bovinae</taxon>
        <taxon>Bos</taxon>
    </lineage>
</organism>
<accession>Q2M2T5</accession>
<feature type="chain" id="PRO_0000260181" description="COMM domain-containing protein 1">
    <location>
        <begin position="1"/>
        <end position="188"/>
    </location>
</feature>
<feature type="domain" description="COMM" evidence="3">
    <location>
        <begin position="117"/>
        <end position="185"/>
    </location>
</feature>
<feature type="region of interest" description="Sufficient for interaction with SLC12A2" evidence="1">
    <location>
        <begin position="1"/>
        <end position="122"/>
    </location>
</feature>
<feature type="region of interest" description="Required for binding to PtdIns(4,5)P2" evidence="1">
    <location>
        <begin position="124"/>
        <end position="188"/>
    </location>
</feature>
<feature type="binding site" evidence="2">
    <location>
        <position position="100"/>
    </location>
    <ligand>
        <name>Cu cation</name>
        <dbReference type="ChEBI" id="CHEBI:23378"/>
    </ligand>
</feature>
<feature type="binding site" evidence="2">
    <location>
        <position position="109"/>
    </location>
    <ligand>
        <name>Cu cation</name>
        <dbReference type="ChEBI" id="CHEBI:23378"/>
    </ligand>
</feature>
<feature type="binding site" evidence="2">
    <location>
        <position position="133"/>
    </location>
    <ligand>
        <name>Cu cation</name>
        <dbReference type="ChEBI" id="CHEBI:23378"/>
    </ligand>
</feature>